<proteinExistence type="inferred from homology"/>
<evidence type="ECO:0000255" key="1">
    <source>
        <dbReference type="HAMAP-Rule" id="MF_00530"/>
    </source>
</evidence>
<gene>
    <name evidence="1" type="primary">atpC</name>
    <name type="ordered locus">Pcryo_2326</name>
</gene>
<name>ATPE_PSYCK</name>
<protein>
    <recommendedName>
        <fullName evidence="1">ATP synthase epsilon chain</fullName>
    </recommendedName>
    <alternativeName>
        <fullName evidence="1">ATP synthase F1 sector epsilon subunit</fullName>
    </alternativeName>
    <alternativeName>
        <fullName evidence="1">F-ATPase epsilon subunit</fullName>
    </alternativeName>
</protein>
<sequence length="138" mass="14921">MATLQCRVVSAREELYSGEISMLIATGTEGEIGVLPGHTPLITLLKPGAMRVQTPDGEEEVIYVSGGVLEVQPKMVTVLADTAMRAHNLDESKIVEARKKAEQMLVNQSDTVQTNAALASLAESVAQLQTIRKYKNRA</sequence>
<comment type="function">
    <text evidence="1">Produces ATP from ADP in the presence of a proton gradient across the membrane.</text>
</comment>
<comment type="subunit">
    <text>F-type ATPases have 2 components, CF(1) - the catalytic core - and CF(0) - the membrane proton channel. CF(1) has five subunits: alpha(3), beta(3), gamma(1), delta(1), epsilon(1). CF(0) has three main subunits: a, b and c.</text>
</comment>
<comment type="subcellular location">
    <subcellularLocation>
        <location evidence="1">Cell inner membrane</location>
        <topology evidence="1">Peripheral membrane protein</topology>
    </subcellularLocation>
</comment>
<comment type="similarity">
    <text evidence="1">Belongs to the ATPase epsilon chain family.</text>
</comment>
<dbReference type="EMBL" id="CP000323">
    <property type="protein sequence ID" value="ABE76103.1"/>
    <property type="molecule type" value="Genomic_DNA"/>
</dbReference>
<dbReference type="RefSeq" id="WP_011514632.1">
    <property type="nucleotide sequence ID" value="NC_007969.1"/>
</dbReference>
<dbReference type="SMR" id="Q1Q8A0"/>
<dbReference type="STRING" id="335284.Pcryo_2326"/>
<dbReference type="KEGG" id="pcr:Pcryo_2326"/>
<dbReference type="eggNOG" id="COG0355">
    <property type="taxonomic scope" value="Bacteria"/>
</dbReference>
<dbReference type="HOGENOM" id="CLU_084338_2_0_6"/>
<dbReference type="Proteomes" id="UP000002425">
    <property type="component" value="Chromosome"/>
</dbReference>
<dbReference type="GO" id="GO:0005886">
    <property type="term" value="C:plasma membrane"/>
    <property type="evidence" value="ECO:0007669"/>
    <property type="project" value="UniProtKB-SubCell"/>
</dbReference>
<dbReference type="GO" id="GO:0045259">
    <property type="term" value="C:proton-transporting ATP synthase complex"/>
    <property type="evidence" value="ECO:0007669"/>
    <property type="project" value="UniProtKB-KW"/>
</dbReference>
<dbReference type="GO" id="GO:0005524">
    <property type="term" value="F:ATP binding"/>
    <property type="evidence" value="ECO:0007669"/>
    <property type="project" value="UniProtKB-UniRule"/>
</dbReference>
<dbReference type="GO" id="GO:0046933">
    <property type="term" value="F:proton-transporting ATP synthase activity, rotational mechanism"/>
    <property type="evidence" value="ECO:0007669"/>
    <property type="project" value="UniProtKB-UniRule"/>
</dbReference>
<dbReference type="CDD" id="cd12152">
    <property type="entry name" value="F1-ATPase_delta"/>
    <property type="match status" value="1"/>
</dbReference>
<dbReference type="FunFam" id="2.60.15.10:FF:000001">
    <property type="entry name" value="ATP synthase epsilon chain"/>
    <property type="match status" value="1"/>
</dbReference>
<dbReference type="Gene3D" id="1.20.5.440">
    <property type="entry name" value="ATP synthase delta/epsilon subunit, C-terminal domain"/>
    <property type="match status" value="1"/>
</dbReference>
<dbReference type="Gene3D" id="2.60.15.10">
    <property type="entry name" value="F0F1 ATP synthase delta/epsilon subunit, N-terminal"/>
    <property type="match status" value="1"/>
</dbReference>
<dbReference type="HAMAP" id="MF_00530">
    <property type="entry name" value="ATP_synth_epsil_bac"/>
    <property type="match status" value="1"/>
</dbReference>
<dbReference type="InterPro" id="IPR036794">
    <property type="entry name" value="ATP_F1_dsu/esu_C_sf"/>
</dbReference>
<dbReference type="InterPro" id="IPR001469">
    <property type="entry name" value="ATP_synth_F1_dsu/esu"/>
</dbReference>
<dbReference type="InterPro" id="IPR020546">
    <property type="entry name" value="ATP_synth_F1_dsu/esu_N"/>
</dbReference>
<dbReference type="InterPro" id="IPR036771">
    <property type="entry name" value="ATPsynth_dsu/esu_N"/>
</dbReference>
<dbReference type="NCBIfam" id="TIGR01216">
    <property type="entry name" value="ATP_synt_epsi"/>
    <property type="match status" value="1"/>
</dbReference>
<dbReference type="NCBIfam" id="NF001847">
    <property type="entry name" value="PRK00571.1-4"/>
    <property type="match status" value="1"/>
</dbReference>
<dbReference type="PANTHER" id="PTHR13822">
    <property type="entry name" value="ATP SYNTHASE DELTA/EPSILON CHAIN"/>
    <property type="match status" value="1"/>
</dbReference>
<dbReference type="PANTHER" id="PTHR13822:SF10">
    <property type="entry name" value="ATP SYNTHASE EPSILON CHAIN, CHLOROPLASTIC"/>
    <property type="match status" value="1"/>
</dbReference>
<dbReference type="Pfam" id="PF02823">
    <property type="entry name" value="ATP-synt_DE_N"/>
    <property type="match status" value="1"/>
</dbReference>
<dbReference type="SUPFAM" id="SSF46604">
    <property type="entry name" value="Epsilon subunit of F1F0-ATP synthase C-terminal domain"/>
    <property type="match status" value="1"/>
</dbReference>
<dbReference type="SUPFAM" id="SSF51344">
    <property type="entry name" value="Epsilon subunit of F1F0-ATP synthase N-terminal domain"/>
    <property type="match status" value="1"/>
</dbReference>
<feature type="chain" id="PRO_0000265867" description="ATP synthase epsilon chain">
    <location>
        <begin position="1"/>
        <end position="138"/>
    </location>
</feature>
<accession>Q1Q8A0</accession>
<keyword id="KW-0066">ATP synthesis</keyword>
<keyword id="KW-0997">Cell inner membrane</keyword>
<keyword id="KW-1003">Cell membrane</keyword>
<keyword id="KW-0139">CF(1)</keyword>
<keyword id="KW-0375">Hydrogen ion transport</keyword>
<keyword id="KW-0406">Ion transport</keyword>
<keyword id="KW-0472">Membrane</keyword>
<keyword id="KW-0813">Transport</keyword>
<organism>
    <name type="scientific">Psychrobacter cryohalolentis (strain ATCC BAA-1226 / DSM 17306 / VKM B-2378 / K5)</name>
    <dbReference type="NCBI Taxonomy" id="335284"/>
    <lineage>
        <taxon>Bacteria</taxon>
        <taxon>Pseudomonadati</taxon>
        <taxon>Pseudomonadota</taxon>
        <taxon>Gammaproteobacteria</taxon>
        <taxon>Moraxellales</taxon>
        <taxon>Moraxellaceae</taxon>
        <taxon>Psychrobacter</taxon>
    </lineage>
</organism>
<reference key="1">
    <citation type="submission" date="2006-03" db="EMBL/GenBank/DDBJ databases">
        <title>Complete sequence of chromosome of Psychrobacter cryohalolentis K5.</title>
        <authorList>
            <consortium name="US DOE Joint Genome Institute"/>
            <person name="Copeland A."/>
            <person name="Lucas S."/>
            <person name="Lapidus A."/>
            <person name="Barry K."/>
            <person name="Detter J.C."/>
            <person name="Glavina T."/>
            <person name="Hammon N."/>
            <person name="Israni S."/>
            <person name="Dalin E."/>
            <person name="Tice H."/>
            <person name="Pitluck S."/>
            <person name="Brettin T."/>
            <person name="Bruce D."/>
            <person name="Han C."/>
            <person name="Tapia R."/>
            <person name="Sims D.R."/>
            <person name="Gilna P."/>
            <person name="Schmutz J."/>
            <person name="Larimer F."/>
            <person name="Land M."/>
            <person name="Hauser L."/>
            <person name="Kyrpides N."/>
            <person name="Kim E."/>
            <person name="Richardson P."/>
        </authorList>
    </citation>
    <scope>NUCLEOTIDE SEQUENCE [LARGE SCALE GENOMIC DNA]</scope>
    <source>
        <strain>ATCC BAA-1226 / DSM 17306 / VKM B-2378 / K5</strain>
    </source>
</reference>